<accession>Q5L4T7</accession>
<sequence>MAVRPRIQLLDTVTINQIAAGEVIENAVSVVKELVENALDAGADEIEVETLGGGQGLIVVKDNGCGMSSDEVTLALKRHATSKIEEFSDVFSLSSFGFRGEALPAIASISKMEILSCPKGEEGSRTIIHGGEVIAAEAKPRQLGTTISVDSLFYNVPVRRGFQKSPQTNRIAMRKLLENRILSLESVGWSWISERQQEFHILKHQGLAERVAFVMGEGFMQEALRVDRVEEPIRIVGFLGSPCFHRPTRLGQRIFINDRPVDSPLISKQISEAYTMLLPPQRYPVFVLKLYLPPQWCDFNVHPQKTEVRILKEEFVREFLSESIGEVLARSQESSSYKKTSLTLPTLRFFDGQLPEISLEQPRESMSLPVTQLATPSIRSISSLGCQQEIPAVDTQTEIVWGESQEVRFLTSLGKIVLAEDSEGVHAIFTEAARKHLFYLSLIENQQEHYKSQSFLVPLCLEVTPQERVFLLSHIEEFKQLGIEISQIGPCVFAIESAPTFIGEEELKSWILSLAAESHTKVDKKAIALLIKESLTQTIFGKTLRTFDISWLSLLWQIGKPEKAFDGTLIRRLILDEDFIKE</sequence>
<dbReference type="EMBL" id="CR848038">
    <property type="protein sequence ID" value="CAH64359.1"/>
    <property type="molecule type" value="Genomic_DNA"/>
</dbReference>
<dbReference type="RefSeq" id="WP_011097425.1">
    <property type="nucleotide sequence ID" value="NC_004552.2"/>
</dbReference>
<dbReference type="SMR" id="Q5L4T7"/>
<dbReference type="KEGG" id="cab:CAB920"/>
<dbReference type="eggNOG" id="COG0323">
    <property type="taxonomic scope" value="Bacteria"/>
</dbReference>
<dbReference type="HOGENOM" id="CLU_004131_4_2_0"/>
<dbReference type="OrthoDB" id="9763467at2"/>
<dbReference type="Proteomes" id="UP000001012">
    <property type="component" value="Chromosome"/>
</dbReference>
<dbReference type="GO" id="GO:0032300">
    <property type="term" value="C:mismatch repair complex"/>
    <property type="evidence" value="ECO:0007669"/>
    <property type="project" value="InterPro"/>
</dbReference>
<dbReference type="GO" id="GO:0005524">
    <property type="term" value="F:ATP binding"/>
    <property type="evidence" value="ECO:0007669"/>
    <property type="project" value="InterPro"/>
</dbReference>
<dbReference type="GO" id="GO:0016887">
    <property type="term" value="F:ATP hydrolysis activity"/>
    <property type="evidence" value="ECO:0007669"/>
    <property type="project" value="InterPro"/>
</dbReference>
<dbReference type="GO" id="GO:0140664">
    <property type="term" value="F:ATP-dependent DNA damage sensor activity"/>
    <property type="evidence" value="ECO:0007669"/>
    <property type="project" value="InterPro"/>
</dbReference>
<dbReference type="GO" id="GO:0030983">
    <property type="term" value="F:mismatched DNA binding"/>
    <property type="evidence" value="ECO:0007669"/>
    <property type="project" value="InterPro"/>
</dbReference>
<dbReference type="GO" id="GO:0006298">
    <property type="term" value="P:mismatch repair"/>
    <property type="evidence" value="ECO:0007669"/>
    <property type="project" value="UniProtKB-UniRule"/>
</dbReference>
<dbReference type="CDD" id="cd16926">
    <property type="entry name" value="HATPase_MutL-MLH-PMS-like"/>
    <property type="match status" value="1"/>
</dbReference>
<dbReference type="CDD" id="cd00782">
    <property type="entry name" value="MutL_Trans"/>
    <property type="match status" value="1"/>
</dbReference>
<dbReference type="FunFam" id="3.30.565.10:FF:000003">
    <property type="entry name" value="DNA mismatch repair endonuclease MutL"/>
    <property type="match status" value="1"/>
</dbReference>
<dbReference type="Gene3D" id="3.30.230.10">
    <property type="match status" value="1"/>
</dbReference>
<dbReference type="Gene3D" id="3.30.565.10">
    <property type="entry name" value="Histidine kinase-like ATPase, C-terminal domain"/>
    <property type="match status" value="1"/>
</dbReference>
<dbReference type="Gene3D" id="3.30.1370.100">
    <property type="entry name" value="MutL, C-terminal domain, regulatory subdomain"/>
    <property type="match status" value="1"/>
</dbReference>
<dbReference type="HAMAP" id="MF_00149">
    <property type="entry name" value="DNA_mis_repair"/>
    <property type="match status" value="1"/>
</dbReference>
<dbReference type="InterPro" id="IPR014762">
    <property type="entry name" value="DNA_mismatch_repair_CS"/>
</dbReference>
<dbReference type="InterPro" id="IPR020667">
    <property type="entry name" value="DNA_mismatch_repair_MutL"/>
</dbReference>
<dbReference type="InterPro" id="IPR013507">
    <property type="entry name" value="DNA_mismatch_S5_2-like"/>
</dbReference>
<dbReference type="InterPro" id="IPR036890">
    <property type="entry name" value="HATPase_C_sf"/>
</dbReference>
<dbReference type="InterPro" id="IPR002099">
    <property type="entry name" value="MutL/Mlh/PMS"/>
</dbReference>
<dbReference type="InterPro" id="IPR038973">
    <property type="entry name" value="MutL/Mlh/Pms-like"/>
</dbReference>
<dbReference type="InterPro" id="IPR014790">
    <property type="entry name" value="MutL_C"/>
</dbReference>
<dbReference type="InterPro" id="IPR042121">
    <property type="entry name" value="MutL_C_regsub"/>
</dbReference>
<dbReference type="InterPro" id="IPR037198">
    <property type="entry name" value="MutL_C_sf"/>
</dbReference>
<dbReference type="InterPro" id="IPR020568">
    <property type="entry name" value="Ribosomal_Su5_D2-typ_SF"/>
</dbReference>
<dbReference type="InterPro" id="IPR014721">
    <property type="entry name" value="Ribsml_uS5_D2-typ_fold_subgr"/>
</dbReference>
<dbReference type="NCBIfam" id="TIGR00585">
    <property type="entry name" value="mutl"/>
    <property type="match status" value="1"/>
</dbReference>
<dbReference type="NCBIfam" id="NF000954">
    <property type="entry name" value="PRK00095.2-5"/>
    <property type="match status" value="1"/>
</dbReference>
<dbReference type="PANTHER" id="PTHR10073">
    <property type="entry name" value="DNA MISMATCH REPAIR PROTEIN MLH, PMS, MUTL"/>
    <property type="match status" value="1"/>
</dbReference>
<dbReference type="PANTHER" id="PTHR10073:SF12">
    <property type="entry name" value="DNA MISMATCH REPAIR PROTEIN MLH1"/>
    <property type="match status" value="1"/>
</dbReference>
<dbReference type="Pfam" id="PF01119">
    <property type="entry name" value="DNA_mis_repair"/>
    <property type="match status" value="1"/>
</dbReference>
<dbReference type="Pfam" id="PF13589">
    <property type="entry name" value="HATPase_c_3"/>
    <property type="match status" value="1"/>
</dbReference>
<dbReference type="Pfam" id="PF08676">
    <property type="entry name" value="MutL_C"/>
    <property type="match status" value="1"/>
</dbReference>
<dbReference type="SMART" id="SM01340">
    <property type="entry name" value="DNA_mis_repair"/>
    <property type="match status" value="1"/>
</dbReference>
<dbReference type="SMART" id="SM00853">
    <property type="entry name" value="MutL_C"/>
    <property type="match status" value="1"/>
</dbReference>
<dbReference type="SUPFAM" id="SSF55874">
    <property type="entry name" value="ATPase domain of HSP90 chaperone/DNA topoisomerase II/histidine kinase"/>
    <property type="match status" value="1"/>
</dbReference>
<dbReference type="SUPFAM" id="SSF118116">
    <property type="entry name" value="DNA mismatch repair protein MutL"/>
    <property type="match status" value="1"/>
</dbReference>
<dbReference type="SUPFAM" id="SSF54211">
    <property type="entry name" value="Ribosomal protein S5 domain 2-like"/>
    <property type="match status" value="1"/>
</dbReference>
<dbReference type="PROSITE" id="PS00058">
    <property type="entry name" value="DNA_MISMATCH_REPAIR_1"/>
    <property type="match status" value="1"/>
</dbReference>
<comment type="function">
    <text evidence="1">This protein is involved in the repair of mismatches in DNA. It is required for dam-dependent methyl-directed DNA mismatch repair. May act as a 'molecular matchmaker', a protein that promotes the formation of a stable complex between two or more DNA-binding proteins in an ATP-dependent manner without itself being part of a final effector complex.</text>
</comment>
<comment type="similarity">
    <text evidence="1">Belongs to the DNA mismatch repair MutL/HexB family.</text>
</comment>
<evidence type="ECO:0000255" key="1">
    <source>
        <dbReference type="HAMAP-Rule" id="MF_00149"/>
    </source>
</evidence>
<reference key="1">
    <citation type="journal article" date="2005" name="Genome Res.">
        <title>The Chlamydophila abortus genome sequence reveals an array of variable proteins that contribute to interspecies variation.</title>
        <authorList>
            <person name="Thomson N.R."/>
            <person name="Yeats C."/>
            <person name="Bell K."/>
            <person name="Holden M.T.G."/>
            <person name="Bentley S.D."/>
            <person name="Livingstone M."/>
            <person name="Cerdeno-Tarraga A.-M."/>
            <person name="Harris B."/>
            <person name="Doggett J."/>
            <person name="Ormond D."/>
            <person name="Mungall K."/>
            <person name="Clarke K."/>
            <person name="Feltwell T."/>
            <person name="Hance Z."/>
            <person name="Sanders M."/>
            <person name="Quail M.A."/>
            <person name="Price C."/>
            <person name="Barrell B.G."/>
            <person name="Parkhill J."/>
            <person name="Longbottom D."/>
        </authorList>
    </citation>
    <scope>NUCLEOTIDE SEQUENCE [LARGE SCALE GENOMIC DNA]</scope>
    <source>
        <strain>DSM 27085 / S26/3</strain>
    </source>
</reference>
<protein>
    <recommendedName>
        <fullName evidence="1">DNA mismatch repair protein MutL</fullName>
    </recommendedName>
</protein>
<keyword id="KW-0227">DNA damage</keyword>
<keyword id="KW-0234">DNA repair</keyword>
<gene>
    <name evidence="1" type="primary">mutL</name>
    <name type="ordered locus">CAB920</name>
</gene>
<proteinExistence type="inferred from homology"/>
<organism>
    <name type="scientific">Chlamydia abortus (strain DSM 27085 / S26/3)</name>
    <name type="common">Chlamydophila abortus</name>
    <dbReference type="NCBI Taxonomy" id="218497"/>
    <lineage>
        <taxon>Bacteria</taxon>
        <taxon>Pseudomonadati</taxon>
        <taxon>Chlamydiota</taxon>
        <taxon>Chlamydiia</taxon>
        <taxon>Chlamydiales</taxon>
        <taxon>Chlamydiaceae</taxon>
        <taxon>Chlamydia/Chlamydophila group</taxon>
        <taxon>Chlamydia</taxon>
    </lineage>
</organism>
<name>MUTL_CHLAB</name>
<feature type="chain" id="PRO_1000096634" description="DNA mismatch repair protein MutL">
    <location>
        <begin position="1"/>
        <end position="582"/>
    </location>
</feature>